<name>TM254_MOUSE</name>
<sequence>MGTATGAGYFQRGSLFWFTVITVSFGYYTWAVFWPQSIPYQSLGPLGPFTKYLVDHYHTFLRNGYWLAWLIHVGESLYALVLCKRKGITDVQAQLLWFLQTFLFGVASLSILIAYRSKRQKHN</sequence>
<reference key="1">
    <citation type="journal article" date="2005" name="Science">
        <title>The transcriptional landscape of the mammalian genome.</title>
        <authorList>
            <person name="Carninci P."/>
            <person name="Kasukawa T."/>
            <person name="Katayama S."/>
            <person name="Gough J."/>
            <person name="Frith M.C."/>
            <person name="Maeda N."/>
            <person name="Oyama R."/>
            <person name="Ravasi T."/>
            <person name="Lenhard B."/>
            <person name="Wells C."/>
            <person name="Kodzius R."/>
            <person name="Shimokawa K."/>
            <person name="Bajic V.B."/>
            <person name="Brenner S.E."/>
            <person name="Batalov S."/>
            <person name="Forrest A.R."/>
            <person name="Zavolan M."/>
            <person name="Davis M.J."/>
            <person name="Wilming L.G."/>
            <person name="Aidinis V."/>
            <person name="Allen J.E."/>
            <person name="Ambesi-Impiombato A."/>
            <person name="Apweiler R."/>
            <person name="Aturaliya R.N."/>
            <person name="Bailey T.L."/>
            <person name="Bansal M."/>
            <person name="Baxter L."/>
            <person name="Beisel K.W."/>
            <person name="Bersano T."/>
            <person name="Bono H."/>
            <person name="Chalk A.M."/>
            <person name="Chiu K.P."/>
            <person name="Choudhary V."/>
            <person name="Christoffels A."/>
            <person name="Clutterbuck D.R."/>
            <person name="Crowe M.L."/>
            <person name="Dalla E."/>
            <person name="Dalrymple B.P."/>
            <person name="de Bono B."/>
            <person name="Della Gatta G."/>
            <person name="di Bernardo D."/>
            <person name="Down T."/>
            <person name="Engstrom P."/>
            <person name="Fagiolini M."/>
            <person name="Faulkner G."/>
            <person name="Fletcher C.F."/>
            <person name="Fukushima T."/>
            <person name="Furuno M."/>
            <person name="Futaki S."/>
            <person name="Gariboldi M."/>
            <person name="Georgii-Hemming P."/>
            <person name="Gingeras T.R."/>
            <person name="Gojobori T."/>
            <person name="Green R.E."/>
            <person name="Gustincich S."/>
            <person name="Harbers M."/>
            <person name="Hayashi Y."/>
            <person name="Hensch T.K."/>
            <person name="Hirokawa N."/>
            <person name="Hill D."/>
            <person name="Huminiecki L."/>
            <person name="Iacono M."/>
            <person name="Ikeo K."/>
            <person name="Iwama A."/>
            <person name="Ishikawa T."/>
            <person name="Jakt M."/>
            <person name="Kanapin A."/>
            <person name="Katoh M."/>
            <person name="Kawasawa Y."/>
            <person name="Kelso J."/>
            <person name="Kitamura H."/>
            <person name="Kitano H."/>
            <person name="Kollias G."/>
            <person name="Krishnan S.P."/>
            <person name="Kruger A."/>
            <person name="Kummerfeld S.K."/>
            <person name="Kurochkin I.V."/>
            <person name="Lareau L.F."/>
            <person name="Lazarevic D."/>
            <person name="Lipovich L."/>
            <person name="Liu J."/>
            <person name="Liuni S."/>
            <person name="McWilliam S."/>
            <person name="Madan Babu M."/>
            <person name="Madera M."/>
            <person name="Marchionni L."/>
            <person name="Matsuda H."/>
            <person name="Matsuzawa S."/>
            <person name="Miki H."/>
            <person name="Mignone F."/>
            <person name="Miyake S."/>
            <person name="Morris K."/>
            <person name="Mottagui-Tabar S."/>
            <person name="Mulder N."/>
            <person name="Nakano N."/>
            <person name="Nakauchi H."/>
            <person name="Ng P."/>
            <person name="Nilsson R."/>
            <person name="Nishiguchi S."/>
            <person name="Nishikawa S."/>
            <person name="Nori F."/>
            <person name="Ohara O."/>
            <person name="Okazaki Y."/>
            <person name="Orlando V."/>
            <person name="Pang K.C."/>
            <person name="Pavan W.J."/>
            <person name="Pavesi G."/>
            <person name="Pesole G."/>
            <person name="Petrovsky N."/>
            <person name="Piazza S."/>
            <person name="Reed J."/>
            <person name="Reid J.F."/>
            <person name="Ring B.Z."/>
            <person name="Ringwald M."/>
            <person name="Rost B."/>
            <person name="Ruan Y."/>
            <person name="Salzberg S.L."/>
            <person name="Sandelin A."/>
            <person name="Schneider C."/>
            <person name="Schoenbach C."/>
            <person name="Sekiguchi K."/>
            <person name="Semple C.A."/>
            <person name="Seno S."/>
            <person name="Sessa L."/>
            <person name="Sheng Y."/>
            <person name="Shibata Y."/>
            <person name="Shimada H."/>
            <person name="Shimada K."/>
            <person name="Silva D."/>
            <person name="Sinclair B."/>
            <person name="Sperling S."/>
            <person name="Stupka E."/>
            <person name="Sugiura K."/>
            <person name="Sultana R."/>
            <person name="Takenaka Y."/>
            <person name="Taki K."/>
            <person name="Tammoja K."/>
            <person name="Tan S.L."/>
            <person name="Tang S."/>
            <person name="Taylor M.S."/>
            <person name="Tegner J."/>
            <person name="Teichmann S.A."/>
            <person name="Ueda H.R."/>
            <person name="van Nimwegen E."/>
            <person name="Verardo R."/>
            <person name="Wei C.L."/>
            <person name="Yagi K."/>
            <person name="Yamanishi H."/>
            <person name="Zabarovsky E."/>
            <person name="Zhu S."/>
            <person name="Zimmer A."/>
            <person name="Hide W."/>
            <person name="Bult C."/>
            <person name="Grimmond S.M."/>
            <person name="Teasdale R.D."/>
            <person name="Liu E.T."/>
            <person name="Brusic V."/>
            <person name="Quackenbush J."/>
            <person name="Wahlestedt C."/>
            <person name="Mattick J.S."/>
            <person name="Hume D.A."/>
            <person name="Kai C."/>
            <person name="Sasaki D."/>
            <person name="Tomaru Y."/>
            <person name="Fukuda S."/>
            <person name="Kanamori-Katayama M."/>
            <person name="Suzuki M."/>
            <person name="Aoki J."/>
            <person name="Arakawa T."/>
            <person name="Iida J."/>
            <person name="Imamura K."/>
            <person name="Itoh M."/>
            <person name="Kato T."/>
            <person name="Kawaji H."/>
            <person name="Kawagashira N."/>
            <person name="Kawashima T."/>
            <person name="Kojima M."/>
            <person name="Kondo S."/>
            <person name="Konno H."/>
            <person name="Nakano K."/>
            <person name="Ninomiya N."/>
            <person name="Nishio T."/>
            <person name="Okada M."/>
            <person name="Plessy C."/>
            <person name="Shibata K."/>
            <person name="Shiraki T."/>
            <person name="Suzuki S."/>
            <person name="Tagami M."/>
            <person name="Waki K."/>
            <person name="Watahiki A."/>
            <person name="Okamura-Oho Y."/>
            <person name="Suzuki H."/>
            <person name="Kawai J."/>
            <person name="Hayashizaki Y."/>
        </authorList>
    </citation>
    <scope>NUCLEOTIDE SEQUENCE [LARGE SCALE MRNA] (ISOFORMS 1 AND 2)</scope>
    <source>
        <strain>C57BL/6J</strain>
        <tissue>Kidney</tissue>
        <tissue>Small intestine</tissue>
    </source>
</reference>
<reference key="2">
    <citation type="journal article" date="2009" name="PLoS Biol.">
        <title>Lineage-specific biology revealed by a finished genome assembly of the mouse.</title>
        <authorList>
            <person name="Church D.M."/>
            <person name="Goodstadt L."/>
            <person name="Hillier L.W."/>
            <person name="Zody M.C."/>
            <person name="Goldstein S."/>
            <person name="She X."/>
            <person name="Bult C.J."/>
            <person name="Agarwala R."/>
            <person name="Cherry J.L."/>
            <person name="DiCuccio M."/>
            <person name="Hlavina W."/>
            <person name="Kapustin Y."/>
            <person name="Meric P."/>
            <person name="Maglott D."/>
            <person name="Birtle Z."/>
            <person name="Marques A.C."/>
            <person name="Graves T."/>
            <person name="Zhou S."/>
            <person name="Teague B."/>
            <person name="Potamousis K."/>
            <person name="Churas C."/>
            <person name="Place M."/>
            <person name="Herschleb J."/>
            <person name="Runnheim R."/>
            <person name="Forrest D."/>
            <person name="Amos-Landgraf J."/>
            <person name="Schwartz D.C."/>
            <person name="Cheng Z."/>
            <person name="Lindblad-Toh K."/>
            <person name="Eichler E.E."/>
            <person name="Ponting C.P."/>
        </authorList>
    </citation>
    <scope>NUCLEOTIDE SEQUENCE [LARGE SCALE GENOMIC DNA]</scope>
    <source>
        <strain>C57BL/6J</strain>
    </source>
</reference>
<reference key="3">
    <citation type="journal article" date="2004" name="Genome Res.">
        <title>The status, quality, and expansion of the NIH full-length cDNA project: the Mammalian Gene Collection (MGC).</title>
        <authorList>
            <consortium name="The MGC Project Team"/>
        </authorList>
    </citation>
    <scope>NUCLEOTIDE SEQUENCE [LARGE SCALE MRNA] (ISOFORM 1)</scope>
    <source>
        <strain>FVB/N</strain>
        <tissue>Liver</tissue>
    </source>
</reference>
<reference key="4">
    <citation type="journal article" date="2010" name="Cell">
        <title>A tissue-specific atlas of mouse protein phosphorylation and expression.</title>
        <authorList>
            <person name="Huttlin E.L."/>
            <person name="Jedrychowski M.P."/>
            <person name="Elias J.E."/>
            <person name="Goswami T."/>
            <person name="Rad R."/>
            <person name="Beausoleil S.A."/>
            <person name="Villen J."/>
            <person name="Haas W."/>
            <person name="Sowa M.E."/>
            <person name="Gygi S.P."/>
        </authorList>
    </citation>
    <scope>IDENTIFICATION BY MASS SPECTROMETRY [LARGE SCALE ANALYSIS]</scope>
    <source>
        <tissue>Kidney</tissue>
        <tissue>Liver</tissue>
    </source>
</reference>
<feature type="chain" id="PRO_0000089797" description="Transmembrane protein 254">
    <location>
        <begin position="1"/>
        <end position="123"/>
    </location>
</feature>
<feature type="transmembrane region" description="Helical" evidence="1">
    <location>
        <begin position="15"/>
        <end position="35"/>
    </location>
</feature>
<feature type="transmembrane region" description="Helical" evidence="1">
    <location>
        <begin position="63"/>
        <end position="83"/>
    </location>
</feature>
<feature type="transmembrane region" description="Helical" evidence="1">
    <location>
        <begin position="95"/>
        <end position="115"/>
    </location>
</feature>
<feature type="splice variant" id="VSP_058265" description="In isoform 2.">
    <original>MGTATGAGYFQRGSLFWFTVITVSFGYYT</original>
    <variation>MVVAKSEARRDPTAYFRVARLWPSLITALGLGYFA</variation>
    <location>
        <begin position="1"/>
        <end position="29"/>
    </location>
</feature>
<dbReference type="EMBL" id="AK002441">
    <property type="protein sequence ID" value="BAB22103.1"/>
    <property type="molecule type" value="mRNA"/>
</dbReference>
<dbReference type="EMBL" id="AK008299">
    <property type="protein sequence ID" value="BAB25584.1"/>
    <property type="molecule type" value="mRNA"/>
</dbReference>
<dbReference type="EMBL" id="AC165285">
    <property type="status" value="NOT_ANNOTATED_CDS"/>
    <property type="molecule type" value="Genomic_DNA"/>
</dbReference>
<dbReference type="EMBL" id="AC174479">
    <property type="status" value="NOT_ANNOTATED_CDS"/>
    <property type="molecule type" value="Genomic_DNA"/>
</dbReference>
<dbReference type="EMBL" id="AC175032">
    <property type="status" value="NOT_ANNOTATED_CDS"/>
    <property type="molecule type" value="Genomic_DNA"/>
</dbReference>
<dbReference type="EMBL" id="BC031854">
    <property type="protein sequence ID" value="AAH31854.1"/>
    <property type="molecule type" value="mRNA"/>
</dbReference>
<dbReference type="CCDS" id="CCDS26876.1">
    <molecule id="P0DN89-2"/>
</dbReference>
<dbReference type="CCDS" id="CCDS49420.1">
    <molecule id="P0DN89-1"/>
</dbReference>
<dbReference type="RefSeq" id="NP_001257424.1">
    <property type="nucleotide sequence ID" value="NM_001270495.1"/>
</dbReference>
<dbReference type="RefSeq" id="NP_001257425.1">
    <property type="nucleotide sequence ID" value="NM_001270496.1"/>
</dbReference>
<dbReference type="RefSeq" id="NP_001257427.1">
    <property type="nucleotide sequence ID" value="NM_001270498.1"/>
</dbReference>
<dbReference type="RefSeq" id="NP_001257428.1">
    <property type="nucleotide sequence ID" value="NM_001270499.1"/>
</dbReference>
<dbReference type="RefSeq" id="NP_079587.1">
    <molecule id="P0DN89-2"/>
    <property type="nucleotide sequence ID" value="NM_025311.3"/>
</dbReference>
<dbReference type="RefSeq" id="NP_080955.1">
    <molecule id="P0DN89-1"/>
    <property type="nucleotide sequence ID" value="NM_026679.2"/>
</dbReference>
<dbReference type="BioGRID" id="782698">
    <property type="interactions" value="1"/>
</dbReference>
<dbReference type="FunCoup" id="P0DN89">
    <property type="interactions" value="9"/>
</dbReference>
<dbReference type="IntAct" id="P0DN89">
    <property type="interactions" value="1"/>
</dbReference>
<dbReference type="STRING" id="10090.ENSMUSP00000098369"/>
<dbReference type="PhosphoSitePlus" id="P0DN89"/>
<dbReference type="jPOST" id="P0DN89"/>
<dbReference type="Pumba" id="P0DN89"/>
<dbReference type="Antibodypedia" id="29924">
    <property type="antibodies" value="79 antibodies from 18 providers"/>
</dbReference>
<dbReference type="DNASU" id="66039"/>
<dbReference type="Ensembl" id="ENSMUST00000100811.6">
    <molecule id="P0DN89-2"/>
    <property type="protein sequence ID" value="ENSMUSP00000098374.5"/>
    <property type="gene ID" value="ENSMUSG00000072676.13"/>
</dbReference>
<dbReference type="Ensembl" id="ENSMUST00000185006.9">
    <molecule id="P0DN89-1"/>
    <property type="protein sequence ID" value="ENSMUSP00000139270.2"/>
    <property type="gene ID" value="ENSMUSG00000072676.13"/>
</dbReference>
<dbReference type="GeneID" id="66039"/>
<dbReference type="KEGG" id="mmu:66039"/>
<dbReference type="UCSC" id="uc007srx.2">
    <property type="organism name" value="mouse"/>
</dbReference>
<dbReference type="AGR" id="MGI:1196450"/>
<dbReference type="CTD" id="80195"/>
<dbReference type="MGI" id="MGI:1196450">
    <property type="gene designation" value="Tmem254"/>
</dbReference>
<dbReference type="VEuPathDB" id="HostDB:ENSMUSG00000021867"/>
<dbReference type="VEuPathDB" id="HostDB:ENSMUSG00000072676"/>
<dbReference type="VEuPathDB" id="HostDB:ENSMUSG00000072680"/>
<dbReference type="GeneTree" id="ENSGT00390000016042"/>
<dbReference type="InParanoid" id="P0DN89"/>
<dbReference type="OMA" id="IMYKGWW"/>
<dbReference type="OrthoDB" id="16136at9989"/>
<dbReference type="TreeFam" id="TF328617"/>
<dbReference type="BioGRID-ORCS" id="100039192">
    <property type="hits" value="1 hit in 35 CRISPR screens"/>
</dbReference>
<dbReference type="BioGRID-ORCS" id="100039257">
    <property type="hits" value="0 hits in 36 CRISPR screens"/>
</dbReference>
<dbReference type="BioGRID-ORCS" id="66039">
    <property type="hits" value="0 hits in 38 CRISPR screens"/>
</dbReference>
<dbReference type="ChiTaRS" id="Tmem254b">
    <property type="organism name" value="mouse"/>
</dbReference>
<dbReference type="ChiTaRS" id="Tmem254c">
    <property type="organism name" value="mouse"/>
</dbReference>
<dbReference type="PRO" id="PR:P0DN89"/>
<dbReference type="Proteomes" id="UP000000589">
    <property type="component" value="Chromosome 14"/>
</dbReference>
<dbReference type="RNAct" id="P0DN89">
    <property type="molecule type" value="protein"/>
</dbReference>
<dbReference type="Bgee" id="ENSMUSG00000072676">
    <property type="expression patterns" value="Expressed in vasculature of organ and 93 other cell types or tissues"/>
</dbReference>
<dbReference type="ExpressionAtlas" id="P0DN89">
    <property type="expression patterns" value="baseline and differential"/>
</dbReference>
<dbReference type="GO" id="GO:0016020">
    <property type="term" value="C:membrane"/>
    <property type="evidence" value="ECO:0007669"/>
    <property type="project" value="UniProtKB-SubCell"/>
</dbReference>
<dbReference type="InterPro" id="IPR028110">
    <property type="entry name" value="TMEM254"/>
</dbReference>
<dbReference type="PANTHER" id="PTHR34104">
    <property type="entry name" value="TRANSMEMBRANE PROTEIN 254"/>
    <property type="match status" value="1"/>
</dbReference>
<dbReference type="PANTHER" id="PTHR34104:SF3">
    <property type="entry name" value="TRANSMEMBRANE PROTEIN 254"/>
    <property type="match status" value="1"/>
</dbReference>
<dbReference type="Pfam" id="PF14934">
    <property type="entry name" value="TMEM254"/>
    <property type="match status" value="1"/>
</dbReference>
<protein>
    <recommendedName>
        <fullName>Transmembrane protein 254</fullName>
    </recommendedName>
</protein>
<gene>
    <name evidence="3" type="primary">Tmem254</name>
    <name type="synonym">D14Ertd449e</name>
    <name evidence="3" type="synonym">Tmem254a</name>
    <name evidence="3" type="synonym">Tmem254b</name>
    <name evidence="3" type="synonym">Tmem254c</name>
</gene>
<accession>P0DN89</accession>
<accession>F6V0T5</accession>
<accession>P0DN90</accession>
<accession>P0DN91</accession>
<accession>Q9D890</accession>
<accession>Q9DCV5</accession>
<evidence type="ECO:0000255" key="1"/>
<evidence type="ECO:0000305" key="2"/>
<evidence type="ECO:0000312" key="3">
    <source>
        <dbReference type="MGI" id="MGI:1196450"/>
    </source>
</evidence>
<proteinExistence type="evidence at protein level"/>
<comment type="subcellular location">
    <subcellularLocation>
        <location evidence="2">Membrane</location>
        <topology evidence="2">Multi-pass membrane protein</topology>
    </subcellularLocation>
</comment>
<comment type="alternative products">
    <event type="alternative splicing"/>
    <isoform>
        <id>P0DN89-1</id>
        <name>1</name>
        <sequence type="displayed"/>
    </isoform>
    <isoform>
        <id>P0DN89-2</id>
        <name>2</name>
        <sequence type="described" ref="VSP_058265"/>
    </isoform>
</comment>
<organism>
    <name type="scientific">Mus musculus</name>
    <name type="common">Mouse</name>
    <dbReference type="NCBI Taxonomy" id="10090"/>
    <lineage>
        <taxon>Eukaryota</taxon>
        <taxon>Metazoa</taxon>
        <taxon>Chordata</taxon>
        <taxon>Craniata</taxon>
        <taxon>Vertebrata</taxon>
        <taxon>Euteleostomi</taxon>
        <taxon>Mammalia</taxon>
        <taxon>Eutheria</taxon>
        <taxon>Euarchontoglires</taxon>
        <taxon>Glires</taxon>
        <taxon>Rodentia</taxon>
        <taxon>Myomorpha</taxon>
        <taxon>Muroidea</taxon>
        <taxon>Muridae</taxon>
        <taxon>Murinae</taxon>
        <taxon>Mus</taxon>
        <taxon>Mus</taxon>
    </lineage>
</organism>
<keyword id="KW-0025">Alternative splicing</keyword>
<keyword id="KW-0472">Membrane</keyword>
<keyword id="KW-1185">Reference proteome</keyword>
<keyword id="KW-0812">Transmembrane</keyword>
<keyword id="KW-1133">Transmembrane helix</keyword>